<name>APOC1_GRASU</name>
<evidence type="ECO:0000250" key="1">
    <source>
        <dbReference type="UniProtKB" id="P02654"/>
    </source>
</evidence>
<evidence type="ECO:0000250" key="2">
    <source>
        <dbReference type="UniProtKB" id="P33047"/>
    </source>
</evidence>
<evidence type="ECO:0000250" key="3">
    <source>
        <dbReference type="UniProtKB" id="P34928"/>
    </source>
</evidence>
<evidence type="ECO:0000250" key="4">
    <source>
        <dbReference type="UniProtKB" id="P86336"/>
    </source>
</evidence>
<evidence type="ECO:0000255" key="5"/>
<evidence type="ECO:0000305" key="6"/>
<reference key="1">
    <citation type="submission" date="2019-04" db="EMBL/GenBank/DDBJ databases">
        <title>African thicket rat Grammomys surdaster (dolichurus), natural host of rodent malaria parasites, TR1022 genome.</title>
        <authorList>
            <person name="Mullikin J."/>
            <person name="Morrison R."/>
            <person name="Duffy P."/>
        </authorList>
    </citation>
    <scope>NUCLEOTIDE SEQUENCE [LARGE SCALE GENOMIC DNA]</scope>
</reference>
<reference key="2">
    <citation type="unpublished observations" date="2021-07">
        <authorList>
            <person name="Puppione D.L."/>
        </authorList>
    </citation>
    <scope>IDENTIFICATION</scope>
</reference>
<organism>
    <name type="scientific">Grammomys surdaster</name>
    <name type="common">African woodland thicket rat</name>
    <name type="synonym">Thamnomys surdaster</name>
    <dbReference type="NCBI Taxonomy" id="491861"/>
    <lineage>
        <taxon>Eukaryota</taxon>
        <taxon>Metazoa</taxon>
        <taxon>Chordata</taxon>
        <taxon>Craniata</taxon>
        <taxon>Vertebrata</taxon>
        <taxon>Euteleostomi</taxon>
        <taxon>Mammalia</taxon>
        <taxon>Eutheria</taxon>
        <taxon>Euarchontoglires</taxon>
        <taxon>Glires</taxon>
        <taxon>Rodentia</taxon>
        <taxon>Myomorpha</taxon>
        <taxon>Muroidea</taxon>
        <taxon>Muridae</taxon>
        <taxon>Murinae</taxon>
        <taxon>Grammomys</taxon>
    </lineage>
</organism>
<dbReference type="EMBL" id="SRMG01000208">
    <property type="status" value="NOT_ANNOTATED_CDS"/>
    <property type="molecule type" value="Genomic_DNA"/>
</dbReference>
<dbReference type="RefSeq" id="XP_028634510.1">
    <property type="nucleotide sequence ID" value="XM_028778677.1"/>
</dbReference>
<dbReference type="RefSeq" id="XP_028634511.1">
    <property type="nucleotide sequence ID" value="XM_028778678.1"/>
</dbReference>
<dbReference type="RefSeq" id="XP_028634512.1">
    <property type="nucleotide sequence ID" value="XM_028778679.1"/>
</dbReference>
<dbReference type="SMR" id="P0DUX4"/>
<dbReference type="GeneID" id="114630444"/>
<dbReference type="GO" id="GO:0034364">
    <property type="term" value="C:high-density lipoprotein particle"/>
    <property type="evidence" value="ECO:0007669"/>
    <property type="project" value="TreeGrafter"/>
</dbReference>
<dbReference type="GO" id="GO:0034361">
    <property type="term" value="C:very-low-density lipoprotein particle"/>
    <property type="evidence" value="ECO:0007669"/>
    <property type="project" value="UniProtKB-KW"/>
</dbReference>
<dbReference type="GO" id="GO:0005504">
    <property type="term" value="F:fatty acid binding"/>
    <property type="evidence" value="ECO:0007669"/>
    <property type="project" value="TreeGrafter"/>
</dbReference>
<dbReference type="GO" id="GO:0004859">
    <property type="term" value="F:phospholipase inhibitor activity"/>
    <property type="evidence" value="ECO:0007669"/>
    <property type="project" value="TreeGrafter"/>
</dbReference>
<dbReference type="GO" id="GO:0006869">
    <property type="term" value="P:lipid transport"/>
    <property type="evidence" value="ECO:0007669"/>
    <property type="project" value="UniProtKB-KW"/>
</dbReference>
<dbReference type="GO" id="GO:0042157">
    <property type="term" value="P:lipoprotein metabolic process"/>
    <property type="evidence" value="ECO:0007669"/>
    <property type="project" value="InterPro"/>
</dbReference>
<dbReference type="GO" id="GO:0032375">
    <property type="term" value="P:negative regulation of cholesterol transport"/>
    <property type="evidence" value="ECO:0007669"/>
    <property type="project" value="TreeGrafter"/>
</dbReference>
<dbReference type="GO" id="GO:0050995">
    <property type="term" value="P:negative regulation of lipid catabolic process"/>
    <property type="evidence" value="ECO:0007669"/>
    <property type="project" value="TreeGrafter"/>
</dbReference>
<dbReference type="GO" id="GO:0010916">
    <property type="term" value="P:negative regulation of very-low-density lipoprotein particle clearance"/>
    <property type="evidence" value="ECO:0007669"/>
    <property type="project" value="TreeGrafter"/>
</dbReference>
<dbReference type="GO" id="GO:0006641">
    <property type="term" value="P:triglyceride metabolic process"/>
    <property type="evidence" value="ECO:0007669"/>
    <property type="project" value="TreeGrafter"/>
</dbReference>
<dbReference type="GO" id="GO:0034447">
    <property type="term" value="P:very-low-density lipoprotein particle clearance"/>
    <property type="evidence" value="ECO:0007669"/>
    <property type="project" value="TreeGrafter"/>
</dbReference>
<dbReference type="Gene3D" id="4.10.260.30">
    <property type="entry name" value="Apolipoprotein C-I"/>
    <property type="match status" value="1"/>
</dbReference>
<dbReference type="InterPro" id="IPR043081">
    <property type="entry name" value="ApoC-1_sf"/>
</dbReference>
<dbReference type="InterPro" id="IPR006781">
    <property type="entry name" value="ApoC-I"/>
</dbReference>
<dbReference type="PANTHER" id="PTHR16565">
    <property type="entry name" value="APOLIPOPROTEIN C-I"/>
    <property type="match status" value="1"/>
</dbReference>
<dbReference type="PANTHER" id="PTHR16565:SF2">
    <property type="entry name" value="APOLIPOPROTEIN C-I"/>
    <property type="match status" value="1"/>
</dbReference>
<dbReference type="Pfam" id="PF04691">
    <property type="entry name" value="ApoC-I"/>
    <property type="match status" value="1"/>
</dbReference>
<sequence>MRLFIALPVLIVVVAMALEGPAPAQAAPDLSSTLERLPDKLKEFGSTLEDKAREAIDHIKQKEILTKTRTWFSETFSKVKEKLKTTFA</sequence>
<keyword id="KW-0445">Lipid transport</keyword>
<keyword id="KW-0964">Secreted</keyword>
<keyword id="KW-0732">Signal</keyword>
<keyword id="KW-0813">Transport</keyword>
<keyword id="KW-0850">VLDL</keyword>
<accession>P0DUX4</accession>
<comment type="function">
    <text evidence="1 2 3">Inhibitor of lipoprotein binding to the low density lipoprotein (LDL) receptor, LDL receptor-related protein, and very low density lipoprotein (VLDL) receptor. Associates with high density lipoproteins (HDL) and the triacylglycerol-rich lipoproteins in the plasma and makes up about 10% of the protein of the VLDL and 2% of that of HDL. Appears to interfere directly with fatty acid uptake and is also the major plasma inhibitor of cholesteryl ester transfer protein (CETP). Modulates the interaction of APOE with beta-migrating VLDL and inhibits binding of beta-VLDL to the LDL receptor-related protein (By similarity). Binds free fatty acids and reduces their intracellular esterification (By similarity).</text>
</comment>
<comment type="subcellular location">
    <subcellularLocation>
        <location evidence="1">Secreted</location>
    </subcellularLocation>
</comment>
<comment type="similarity">
    <text evidence="6">Belongs to the apolipoprotein C1 family.</text>
</comment>
<gene>
    <name type="primary">Apoc1</name>
</gene>
<proteinExistence type="inferred from homology"/>
<feature type="signal peptide" evidence="5">
    <location>
        <begin position="1"/>
        <end position="26"/>
    </location>
</feature>
<feature type="chain" id="PRO_0000453985" description="Apolipoprotein C-I">
    <location>
        <begin position="27"/>
        <end position="88"/>
    </location>
</feature>
<feature type="chain" id="PRO_0000453986" description="Truncated apolipoprotein C-I" evidence="4">
    <location>
        <begin position="29"/>
        <end position="88"/>
    </location>
</feature>
<protein>
    <recommendedName>
        <fullName>Apolipoprotein C-I</fullName>
        <shortName>Apo-CI</shortName>
        <shortName>ApoC-I</shortName>
    </recommendedName>
    <alternativeName>
        <fullName>Apolipoprotein C1</fullName>
    </alternativeName>
    <component>
        <recommendedName>
            <fullName>Truncated apolipoprotein C-I</fullName>
        </recommendedName>
    </component>
</protein>